<name>UVRA_PARDE</name>
<organism>
    <name type="scientific">Paracoccus denitrificans</name>
    <dbReference type="NCBI Taxonomy" id="266"/>
    <lineage>
        <taxon>Bacteria</taxon>
        <taxon>Pseudomonadati</taxon>
        <taxon>Pseudomonadota</taxon>
        <taxon>Alphaproteobacteria</taxon>
        <taxon>Rhodobacterales</taxon>
        <taxon>Paracoccaceae</taxon>
        <taxon>Paracoccus</taxon>
    </lineage>
</organism>
<comment type="function">
    <text evidence="1">The UvrABC repair system catalyzes the recognition and processing of DNA lesions. UvrA is an ATPase and a DNA-binding protein. A damage recognition complex composed of 2 UvrA and 2 UvrB subunits scans DNA for abnormalities. When the presence of a lesion has been verified by UvrB, the UvrA molecules dissociate (By similarity).</text>
</comment>
<comment type="subunit">
    <text evidence="1">Forms a heterotetramer with UvrB during the search for lesions.</text>
</comment>
<comment type="subcellular location">
    <subcellularLocation>
        <location evidence="1">Cytoplasm</location>
    </subcellularLocation>
</comment>
<comment type="similarity">
    <text evidence="2">Belongs to the ABC transporter superfamily. UvrA family.</text>
</comment>
<feature type="chain" id="PRO_0000093075" description="UvrABC system protein A">
    <location>
        <begin position="1" status="less than"/>
        <end position="110"/>
    </location>
</feature>
<feature type="non-terminal residue">
    <location>
        <position position="1"/>
    </location>
</feature>
<dbReference type="EMBL" id="M93015">
    <property type="protein sequence ID" value="AAA03034.1"/>
    <property type="molecule type" value="Unassigned_DNA"/>
</dbReference>
<dbReference type="PIR" id="A42573">
    <property type="entry name" value="A42573"/>
</dbReference>
<dbReference type="SMR" id="P29927"/>
<dbReference type="GO" id="GO:0005737">
    <property type="term" value="C:cytoplasm"/>
    <property type="evidence" value="ECO:0007669"/>
    <property type="project" value="UniProtKB-SubCell"/>
</dbReference>
<dbReference type="GO" id="GO:0005524">
    <property type="term" value="F:ATP binding"/>
    <property type="evidence" value="ECO:0007669"/>
    <property type="project" value="UniProtKB-KW"/>
</dbReference>
<dbReference type="GO" id="GO:0003677">
    <property type="term" value="F:DNA binding"/>
    <property type="evidence" value="ECO:0007669"/>
    <property type="project" value="UniProtKB-KW"/>
</dbReference>
<dbReference type="GO" id="GO:0004518">
    <property type="term" value="F:nuclease activity"/>
    <property type="evidence" value="ECO:0007669"/>
    <property type="project" value="UniProtKB-KW"/>
</dbReference>
<dbReference type="GO" id="GO:0006281">
    <property type="term" value="P:DNA repair"/>
    <property type="evidence" value="ECO:0007669"/>
    <property type="project" value="UniProtKB-KW"/>
</dbReference>
<dbReference type="GO" id="GO:0009432">
    <property type="term" value="P:SOS response"/>
    <property type="evidence" value="ECO:0007669"/>
    <property type="project" value="UniProtKB-KW"/>
</dbReference>
<dbReference type="Gene3D" id="3.40.50.300">
    <property type="entry name" value="P-loop containing nucleotide triphosphate hydrolases"/>
    <property type="match status" value="1"/>
</dbReference>
<dbReference type="InterPro" id="IPR027417">
    <property type="entry name" value="P-loop_NTPase"/>
</dbReference>
<dbReference type="PANTHER" id="PTHR43152">
    <property type="entry name" value="UVRABC SYSTEM PROTEIN A"/>
    <property type="match status" value="1"/>
</dbReference>
<dbReference type="PANTHER" id="PTHR43152:SF3">
    <property type="entry name" value="UVRABC SYSTEM PROTEIN A"/>
    <property type="match status" value="1"/>
</dbReference>
<dbReference type="SUPFAM" id="SSF52540">
    <property type="entry name" value="P-loop containing nucleoside triphosphate hydrolases"/>
    <property type="match status" value="1"/>
</dbReference>
<sequence>KLSKELSRRATGKTLYILDEPTTGLHFEDVRKLLEVLHSLVDQGNTVVVIEHNLDVIKTADWIIDIGPEGGDGGGAIVATGTPEQVAEVPESHTGRYLAPMLDAARSAAE</sequence>
<evidence type="ECO:0000250" key="1"/>
<evidence type="ECO:0000305" key="2"/>
<gene>
    <name type="primary">uvrA</name>
</gene>
<protein>
    <recommendedName>
        <fullName>UvrABC system protein A</fullName>
        <shortName>UvrA protein</shortName>
    </recommendedName>
    <alternativeName>
        <fullName>Excinuclease ABC subunit A</fullName>
    </alternativeName>
</protein>
<proteinExistence type="inferred from homology"/>
<reference key="1">
    <citation type="journal article" date="1992" name="Biochemistry">
        <title>Gene cluster of the energy-transducing NADH-quinone oxidoreductase of Paracoccus denitrificans: characterization of four structural gene products.</title>
        <authorList>
            <person name="Xu X."/>
            <person name="Matsuno-Yagi A."/>
            <person name="Yagi T."/>
        </authorList>
    </citation>
    <scope>NUCLEOTIDE SEQUENCE [GENOMIC DNA]</scope>
    <source>
        <strain>ATCC 13543 / NRRL B-3784 / NRC 449</strain>
    </source>
</reference>
<keyword id="KW-0067">ATP-binding</keyword>
<keyword id="KW-0963">Cytoplasm</keyword>
<keyword id="KW-0227">DNA damage</keyword>
<keyword id="KW-0228">DNA excision</keyword>
<keyword id="KW-0234">DNA repair</keyword>
<keyword id="KW-0238">DNA-binding</keyword>
<keyword id="KW-0267">Excision nuclease</keyword>
<keyword id="KW-0547">Nucleotide-binding</keyword>
<keyword id="KW-0677">Repeat</keyword>
<keyword id="KW-0742">SOS response</keyword>
<accession>P29927</accession>